<sequence>MTLHKERRIGRLSVLLLLNEAEESTQVEELERDGWKVCLGKVGSMDAHKVVAAIETASKKSGVIQSEGYRESHALYHATMEALHGVTRGEMLLGSLLRTVGLRFAVLRGNPYESEAEGDWIAVSLYGTIGAPIKGLEHETFGVGINHI</sequence>
<name>HUTP_BACSU</name>
<evidence type="ECO:0000269" key="1">
    <source>
    </source>
</evidence>
<evidence type="ECO:0000269" key="2">
    <source>
    </source>
</evidence>
<evidence type="ECO:0000269" key="3">
    <source>
    </source>
</evidence>
<evidence type="ECO:0000305" key="4"/>
<evidence type="ECO:0007829" key="5">
    <source>
        <dbReference type="PDB" id="1WPU"/>
    </source>
</evidence>
<evidence type="ECO:0007829" key="6">
    <source>
        <dbReference type="PDB" id="1WRN"/>
    </source>
</evidence>
<organism>
    <name type="scientific">Bacillus subtilis (strain 168)</name>
    <dbReference type="NCBI Taxonomy" id="224308"/>
    <lineage>
        <taxon>Bacteria</taxon>
        <taxon>Bacillati</taxon>
        <taxon>Bacillota</taxon>
        <taxon>Bacilli</taxon>
        <taxon>Bacillales</taxon>
        <taxon>Bacillaceae</taxon>
        <taxon>Bacillus</taxon>
    </lineage>
</organism>
<comment type="function">
    <text>Antiterminator that binds to cis-acting regulatory sequences on the mRNA in the presence of histidine, thereby suppressing transcription termination and activating the hut operon for histidine utilization.</text>
</comment>
<comment type="subunit">
    <text>Homohexamer.</text>
</comment>
<comment type="similarity">
    <text evidence="4">Belongs to the HutP family.</text>
</comment>
<comment type="sequence caution" evidence="4">
    <conflict type="erroneous initiation">
        <sequence resource="EMBL-CDS" id="AAA22537"/>
    </conflict>
    <text>Extended N-terminus.</text>
</comment>
<comment type="sequence caution" evidence="4">
    <conflict type="erroneous initiation">
        <sequence resource="EMBL-CDS" id="BAA06645"/>
    </conflict>
    <text>Extended N-terminus.</text>
</comment>
<protein>
    <recommendedName>
        <fullName>Hut operon positive regulatory protein</fullName>
    </recommendedName>
</protein>
<keyword id="KW-0002">3D-structure</keyword>
<keyword id="KW-0010">Activator</keyword>
<keyword id="KW-0903">Direct protein sequencing</keyword>
<keyword id="KW-0369">Histidine metabolism</keyword>
<keyword id="KW-1185">Reference proteome</keyword>
<keyword id="KW-0694">RNA-binding</keyword>
<keyword id="KW-0804">Transcription</keyword>
<keyword id="KW-0805">Transcription regulation</keyword>
<gene>
    <name type="primary">hutP</name>
    <name type="ordered locus">BSU39340</name>
</gene>
<dbReference type="EMBL" id="M20659">
    <property type="protein sequence ID" value="AAA22537.1"/>
    <property type="status" value="ALT_INIT"/>
    <property type="molecule type" value="Genomic_DNA"/>
</dbReference>
<dbReference type="EMBL" id="D31856">
    <property type="protein sequence ID" value="BAA06645.1"/>
    <property type="status" value="ALT_INIT"/>
    <property type="molecule type" value="Genomic_DNA"/>
</dbReference>
<dbReference type="EMBL" id="AL009126">
    <property type="protein sequence ID" value="CAB15970.2"/>
    <property type="molecule type" value="Genomic_DNA"/>
</dbReference>
<dbReference type="PIR" id="S18809">
    <property type="entry name" value="RGBSHP"/>
</dbReference>
<dbReference type="RefSeq" id="NP_391813.2">
    <property type="nucleotide sequence ID" value="NC_000964.3"/>
</dbReference>
<dbReference type="RefSeq" id="WP_003243875.1">
    <property type="nucleotide sequence ID" value="NZ_OZ025638.1"/>
</dbReference>
<dbReference type="PDB" id="1VEA">
    <property type="method" value="X-ray"/>
    <property type="resolution" value="2.80 A"/>
    <property type="chains" value="A/B=1-148"/>
</dbReference>
<dbReference type="PDB" id="1WMQ">
    <property type="method" value="X-ray"/>
    <property type="resolution" value="1.60 A"/>
    <property type="chains" value="A/B=2-148"/>
</dbReference>
<dbReference type="PDB" id="1WPS">
    <property type="method" value="X-ray"/>
    <property type="resolution" value="2.80 A"/>
    <property type="chains" value="A/B=2-148"/>
</dbReference>
<dbReference type="PDB" id="1WPT">
    <property type="method" value="X-ray"/>
    <property type="resolution" value="2.70 A"/>
    <property type="chains" value="A/B=2-148"/>
</dbReference>
<dbReference type="PDB" id="1WPU">
    <property type="method" value="X-ray"/>
    <property type="resolution" value="1.48 A"/>
    <property type="chains" value="A/B=2-148"/>
</dbReference>
<dbReference type="PDB" id="1WPV">
    <property type="method" value="X-ray"/>
    <property type="resolution" value="1.70 A"/>
    <property type="chains" value="A/B/C=2-148"/>
</dbReference>
<dbReference type="PDB" id="1WRN">
    <property type="method" value="X-ray"/>
    <property type="resolution" value="2.30 A"/>
    <property type="chains" value="A/B/C=2-148"/>
</dbReference>
<dbReference type="PDB" id="1WRO">
    <property type="method" value="X-ray"/>
    <property type="resolution" value="2.35 A"/>
    <property type="chains" value="A/B/C=2-148"/>
</dbReference>
<dbReference type="PDB" id="1WRQ">
    <property type="method" value="X-ray"/>
    <property type="resolution" value="2.20 A"/>
    <property type="chains" value="A/B=2-148"/>
</dbReference>
<dbReference type="PDB" id="3BOY">
    <property type="method" value="X-ray"/>
    <property type="resolution" value="1.70 A"/>
    <property type="chains" value="A/B/C=2-148"/>
</dbReference>
<dbReference type="PDB" id="4H4L">
    <property type="method" value="X-ray"/>
    <property type="resolution" value="2.50 A"/>
    <property type="chains" value="A/B/C/D/E/F/G/H/I/J/K/L=1-148"/>
</dbReference>
<dbReference type="PDBsum" id="1VEA"/>
<dbReference type="PDBsum" id="1WMQ"/>
<dbReference type="PDBsum" id="1WPS"/>
<dbReference type="PDBsum" id="1WPT"/>
<dbReference type="PDBsum" id="1WPU"/>
<dbReference type="PDBsum" id="1WPV"/>
<dbReference type="PDBsum" id="1WRN"/>
<dbReference type="PDBsum" id="1WRO"/>
<dbReference type="PDBsum" id="1WRQ"/>
<dbReference type="PDBsum" id="3BOY"/>
<dbReference type="PDBsum" id="4H4L"/>
<dbReference type="SMR" id="P10943"/>
<dbReference type="FunCoup" id="P10943">
    <property type="interactions" value="129"/>
</dbReference>
<dbReference type="STRING" id="224308.BSU39340"/>
<dbReference type="DrugBank" id="DB01938">
    <property type="generic name" value="L-Histidine Beta Naphthylamide"/>
</dbReference>
<dbReference type="PaxDb" id="224308-BSU39340"/>
<dbReference type="EnsemblBacteria" id="CAB15970">
    <property type="protein sequence ID" value="CAB15970"/>
    <property type="gene ID" value="BSU_39340"/>
</dbReference>
<dbReference type="GeneID" id="11241540"/>
<dbReference type="GeneID" id="937529"/>
<dbReference type="KEGG" id="bsu:BSU39340"/>
<dbReference type="PATRIC" id="fig|224308.179.peg.4259"/>
<dbReference type="eggNOG" id="ENOG502ZFIH">
    <property type="taxonomic scope" value="Bacteria"/>
</dbReference>
<dbReference type="InParanoid" id="P10943"/>
<dbReference type="OrthoDB" id="2388985at2"/>
<dbReference type="BioCyc" id="BSUB:BSU39340-MONOMER"/>
<dbReference type="EvolutionaryTrace" id="P10943"/>
<dbReference type="PRO" id="PR:P10943"/>
<dbReference type="Proteomes" id="UP000001570">
    <property type="component" value="Chromosome"/>
</dbReference>
<dbReference type="GO" id="GO:0003729">
    <property type="term" value="F:mRNA binding"/>
    <property type="evidence" value="ECO:0007669"/>
    <property type="project" value="UniProtKB-UniRule"/>
</dbReference>
<dbReference type="GO" id="GO:0006547">
    <property type="term" value="P:L-histidine metabolic process"/>
    <property type="evidence" value="ECO:0007669"/>
    <property type="project" value="UniProtKB-UniRule"/>
</dbReference>
<dbReference type="GO" id="GO:0010628">
    <property type="term" value="P:positive regulation of gene expression"/>
    <property type="evidence" value="ECO:0007669"/>
    <property type="project" value="UniProtKB-UniRule"/>
</dbReference>
<dbReference type="CDD" id="cd11640">
    <property type="entry name" value="HutP"/>
    <property type="match status" value="1"/>
</dbReference>
<dbReference type="Gene3D" id="3.40.1510.10">
    <property type="entry name" value="Hut operon regulatory protein HutP"/>
    <property type="match status" value="1"/>
</dbReference>
<dbReference type="HAMAP" id="MF_00779">
    <property type="entry name" value="HutP"/>
    <property type="match status" value="1"/>
</dbReference>
<dbReference type="InterPro" id="IPR015111">
    <property type="entry name" value="Regulatory_HutP"/>
</dbReference>
<dbReference type="InterPro" id="IPR023552">
    <property type="entry name" value="Regulatory_HutP_bacillales"/>
</dbReference>
<dbReference type="InterPro" id="IPR036482">
    <property type="entry name" value="Regulatory_HutP_sf"/>
</dbReference>
<dbReference type="NCBIfam" id="NF002838">
    <property type="entry name" value="PRK03065.1"/>
    <property type="match status" value="1"/>
</dbReference>
<dbReference type="Pfam" id="PF09021">
    <property type="entry name" value="HutP"/>
    <property type="match status" value="1"/>
</dbReference>
<dbReference type="SUPFAM" id="SSF111064">
    <property type="entry name" value="Hut operon positive regulatory protein HutP"/>
    <property type="match status" value="1"/>
</dbReference>
<reference key="1">
    <citation type="journal article" date="1988" name="J. Bacteriol.">
        <title>Cloning and nucleotide sequences of histidase and regulatory genes in the Bacillus subtilis hut operon and positive regulation of the operon.</title>
        <authorList>
            <person name="Oda M."/>
            <person name="Sugishita A."/>
            <person name="Furukawa K."/>
        </authorList>
    </citation>
    <scope>NUCLEOTIDE SEQUENCE [GENOMIC DNA]</scope>
</reference>
<reference key="2">
    <citation type="journal article" date="1995" name="Microbiology">
        <title>Cloning and sequencing of a 29 kb region of the Bacillus subtilis genome containing the hut and wapA loci.</title>
        <authorList>
            <person name="Yoshida K."/>
            <person name="Sano H."/>
            <person name="Seki S."/>
            <person name="Oda M."/>
            <person name="Fujimura M."/>
            <person name="Fujita Y."/>
        </authorList>
    </citation>
    <scope>NUCLEOTIDE SEQUENCE [GENOMIC DNA]</scope>
    <source>
        <strain>168 / BGSC1A1</strain>
    </source>
</reference>
<reference key="3">
    <citation type="journal article" date="1997" name="Nature">
        <title>The complete genome sequence of the Gram-positive bacterium Bacillus subtilis.</title>
        <authorList>
            <person name="Kunst F."/>
            <person name="Ogasawara N."/>
            <person name="Moszer I."/>
            <person name="Albertini A.M."/>
            <person name="Alloni G."/>
            <person name="Azevedo V."/>
            <person name="Bertero M.G."/>
            <person name="Bessieres P."/>
            <person name="Bolotin A."/>
            <person name="Borchert S."/>
            <person name="Borriss R."/>
            <person name="Boursier L."/>
            <person name="Brans A."/>
            <person name="Braun M."/>
            <person name="Brignell S.C."/>
            <person name="Bron S."/>
            <person name="Brouillet S."/>
            <person name="Bruschi C.V."/>
            <person name="Caldwell B."/>
            <person name="Capuano V."/>
            <person name="Carter N.M."/>
            <person name="Choi S.-K."/>
            <person name="Codani J.-J."/>
            <person name="Connerton I.F."/>
            <person name="Cummings N.J."/>
            <person name="Daniel R.A."/>
            <person name="Denizot F."/>
            <person name="Devine K.M."/>
            <person name="Duesterhoeft A."/>
            <person name="Ehrlich S.D."/>
            <person name="Emmerson P.T."/>
            <person name="Entian K.-D."/>
            <person name="Errington J."/>
            <person name="Fabret C."/>
            <person name="Ferrari E."/>
            <person name="Foulger D."/>
            <person name="Fritz C."/>
            <person name="Fujita M."/>
            <person name="Fujita Y."/>
            <person name="Fuma S."/>
            <person name="Galizzi A."/>
            <person name="Galleron N."/>
            <person name="Ghim S.-Y."/>
            <person name="Glaser P."/>
            <person name="Goffeau A."/>
            <person name="Golightly E.J."/>
            <person name="Grandi G."/>
            <person name="Guiseppi G."/>
            <person name="Guy B.J."/>
            <person name="Haga K."/>
            <person name="Haiech J."/>
            <person name="Harwood C.R."/>
            <person name="Henaut A."/>
            <person name="Hilbert H."/>
            <person name="Holsappel S."/>
            <person name="Hosono S."/>
            <person name="Hullo M.-F."/>
            <person name="Itaya M."/>
            <person name="Jones L.-M."/>
            <person name="Joris B."/>
            <person name="Karamata D."/>
            <person name="Kasahara Y."/>
            <person name="Klaerr-Blanchard M."/>
            <person name="Klein C."/>
            <person name="Kobayashi Y."/>
            <person name="Koetter P."/>
            <person name="Koningstein G."/>
            <person name="Krogh S."/>
            <person name="Kumano M."/>
            <person name="Kurita K."/>
            <person name="Lapidus A."/>
            <person name="Lardinois S."/>
            <person name="Lauber J."/>
            <person name="Lazarevic V."/>
            <person name="Lee S.-M."/>
            <person name="Levine A."/>
            <person name="Liu H."/>
            <person name="Masuda S."/>
            <person name="Mauel C."/>
            <person name="Medigue C."/>
            <person name="Medina N."/>
            <person name="Mellado R.P."/>
            <person name="Mizuno M."/>
            <person name="Moestl D."/>
            <person name="Nakai S."/>
            <person name="Noback M."/>
            <person name="Noone D."/>
            <person name="O'Reilly M."/>
            <person name="Ogawa K."/>
            <person name="Ogiwara A."/>
            <person name="Oudega B."/>
            <person name="Park S.-H."/>
            <person name="Parro V."/>
            <person name="Pohl T.M."/>
            <person name="Portetelle D."/>
            <person name="Porwollik S."/>
            <person name="Prescott A.M."/>
            <person name="Presecan E."/>
            <person name="Pujic P."/>
            <person name="Purnelle B."/>
            <person name="Rapoport G."/>
            <person name="Rey M."/>
            <person name="Reynolds S."/>
            <person name="Rieger M."/>
            <person name="Rivolta C."/>
            <person name="Rocha E."/>
            <person name="Roche B."/>
            <person name="Rose M."/>
            <person name="Sadaie Y."/>
            <person name="Sato T."/>
            <person name="Scanlan E."/>
            <person name="Schleich S."/>
            <person name="Schroeter R."/>
            <person name="Scoffone F."/>
            <person name="Sekiguchi J."/>
            <person name="Sekowska A."/>
            <person name="Seror S.J."/>
            <person name="Serror P."/>
            <person name="Shin B.-S."/>
            <person name="Soldo B."/>
            <person name="Sorokin A."/>
            <person name="Tacconi E."/>
            <person name="Takagi T."/>
            <person name="Takahashi H."/>
            <person name="Takemaru K."/>
            <person name="Takeuchi M."/>
            <person name="Tamakoshi A."/>
            <person name="Tanaka T."/>
            <person name="Terpstra P."/>
            <person name="Tognoni A."/>
            <person name="Tosato V."/>
            <person name="Uchiyama S."/>
            <person name="Vandenbol M."/>
            <person name="Vannier F."/>
            <person name="Vassarotti A."/>
            <person name="Viari A."/>
            <person name="Wambutt R."/>
            <person name="Wedler E."/>
            <person name="Wedler H."/>
            <person name="Weitzenegger T."/>
            <person name="Winters P."/>
            <person name="Wipat A."/>
            <person name="Yamamoto H."/>
            <person name="Yamane K."/>
            <person name="Yasumoto K."/>
            <person name="Yata K."/>
            <person name="Yoshida K."/>
            <person name="Yoshikawa H.-F."/>
            <person name="Zumstein E."/>
            <person name="Yoshikawa H."/>
            <person name="Danchin A."/>
        </authorList>
    </citation>
    <scope>NUCLEOTIDE SEQUENCE [LARGE SCALE GENOMIC DNA]</scope>
    <source>
        <strain>168</strain>
    </source>
</reference>
<reference key="4">
    <citation type="journal article" date="2000" name="Mol. Microbiol.">
        <title>Cis-acting regulatory sequences for antitermination in the transcript of the Bacillus subtilis hut operon and histidine-dependent binding of HutP to the transcript containing the regulatory sequences.</title>
        <authorList>
            <person name="Oda M."/>
            <person name="Kobayashi N."/>
            <person name="Ito A."/>
            <person name="Kurusu Y."/>
            <person name="Taira K."/>
        </authorList>
    </citation>
    <scope>PROTEIN SEQUENCE OF 2-8</scope>
    <scope>CHARACTERIZATION</scope>
    <source>
        <strain>168</strain>
    </source>
</reference>
<reference key="5">
    <citation type="journal article" date="2004" name="Mol. Microbiol.">
        <title>Analysis of HutP-dependent transcription antitermination in the Bacillus subtilis hut operon: identification of HutP binding sites on hut antiterminator RNA and the involvement of the N-terminus of HutP in binding of HutP to the antiterminator RNA.</title>
        <authorList>
            <person name="Oda M."/>
            <person name="Kobayashi N."/>
            <person name="Fujita M."/>
            <person name="Miyazaki Y."/>
            <person name="Sadaie Y."/>
            <person name="Kurusu Y."/>
            <person name="Nishikawa S."/>
        </authorList>
    </citation>
    <scope>CHARACTERIZATION OF RNA-BINDING SITES</scope>
    <scope>MUTAGENESIS OF N-TERMINAL RESIDUES</scope>
</reference>
<reference key="6">
    <citation type="journal article" date="2002" name="J. Struct. Biol.">
        <title>Crystallization and preliminary X-ray diffraction studies of HutP protein: an RNA-binding protein that regulates the transcription of hut operon in Bacillus subtilis.</title>
        <authorList>
            <person name="Kumarevel T.S."/>
            <person name="Fujimoto Z."/>
            <person name="Padmanabhan B."/>
            <person name="Oda M."/>
            <person name="Nishikawa S."/>
            <person name="Mizuno H."/>
            <person name="Kumar P.K.R."/>
        </authorList>
    </citation>
    <scope>CRYSTALLIZATION</scope>
    <scope>MUTAGENESIS OF VAL-51</scope>
</reference>
<feature type="initiator methionine" description="Removed" evidence="1">
    <location>
        <position position="1"/>
    </location>
</feature>
<feature type="chain" id="PRO_0000203791" description="Hut operon positive regulatory protein">
    <location>
        <begin position="2"/>
        <end position="148"/>
    </location>
</feature>
<feature type="mutagenesis site" description="Great decrease in binding affinity for mRNA." evidence="3">
    <original>T</original>
    <variation>A</variation>
    <location>
        <position position="2"/>
    </location>
</feature>
<feature type="mutagenesis site" description="Great decrease in binding affinity for mRNA." evidence="3">
    <original>L</original>
    <variation>A</variation>
    <location>
        <position position="3"/>
    </location>
</feature>
<feature type="mutagenesis site" description="Decrease in binding affinity for mRNA." evidence="3">
    <original>H</original>
    <variation>A</variation>
    <location>
        <position position="4"/>
    </location>
</feature>
<feature type="mutagenesis site" description="No effect." evidence="3">
    <original>K</original>
    <variation>A</variation>
    <location>
        <position position="5"/>
    </location>
</feature>
<feature type="mutagenesis site" description="No effect." evidence="3">
    <original>K</original>
    <variation>R</variation>
    <location>
        <position position="5"/>
    </location>
</feature>
<feature type="mutagenesis site" description="No effect." evidence="3">
    <original>E</original>
    <variation>A</variation>
    <location>
        <position position="6"/>
    </location>
</feature>
<feature type="mutagenesis site" description="Decrease in binding affinity for mRNA." evidence="3">
    <original>R</original>
    <variation>A</variation>
    <location>
        <position position="7"/>
    </location>
</feature>
<feature type="mutagenesis site" description="Slight decrease in binding affinity for mRNA." evidence="3">
    <original>R</original>
    <variation>K</variation>
    <location>
        <position position="7"/>
    </location>
</feature>
<feature type="mutagenesis site" description="No effect." evidence="3">
    <original>R</original>
    <variation>A</variation>
    <variation>K</variation>
    <location>
        <position position="8"/>
    </location>
</feature>
<feature type="mutagenesis site" description="Great decrease in binding affinity for mRNA." evidence="3">
    <original>R</original>
    <variation>P</variation>
    <location>
        <position position="8"/>
    </location>
</feature>
<feature type="mutagenesis site" description="Great decrease in binding affinity for mRNA." evidence="3">
    <original>I</original>
    <variation>A</variation>
    <location>
        <position position="9"/>
    </location>
</feature>
<feature type="mutagenesis site" description="Decrease in binding affinity for mRNA." evidence="3">
    <original>G</original>
    <variation>A</variation>
    <location>
        <position position="10"/>
    </location>
</feature>
<feature type="mutagenesis site" description="No effect." evidence="3">
    <original>R</original>
    <variation>A</variation>
    <variation>K</variation>
    <location>
        <position position="11"/>
    </location>
</feature>
<feature type="mutagenesis site" description="No effect." evidence="3">
    <original>R</original>
    <variation>A</variation>
    <location>
        <position position="11"/>
    </location>
</feature>
<feature type="mutagenesis site" description="No effect." evidence="3">
    <original>S</original>
    <variation>A</variation>
    <location>
        <position position="13"/>
    </location>
</feature>
<feature type="mutagenesis site" description="No effect." evidence="3">
    <original>V</original>
    <variation>A</variation>
    <location>
        <position position="14"/>
    </location>
</feature>
<feature type="mutagenesis site" description="Decrease in binding affinity for mRNA." evidence="3">
    <original>L</original>
    <variation>A</variation>
    <location>
        <position position="15"/>
    </location>
</feature>
<feature type="mutagenesis site" description="No effect." evidence="3">
    <original>L</original>
    <variation>A</variation>
    <location>
        <position position="16"/>
    </location>
</feature>
<feature type="mutagenesis site" description="Decrease in binding affinity for mRNA." evidence="3">
    <original>L</original>
    <variation>A</variation>
    <location>
        <position position="17"/>
    </location>
</feature>
<feature type="mutagenesis site" description="Great decrease in binding affinity for mRNA." evidence="3">
    <original>L</original>
    <variation>A</variation>
    <location>
        <position position="18"/>
    </location>
</feature>
<feature type="mutagenesis site" description="No effect." evidence="3">
    <original>N</original>
    <variation>A</variation>
    <location>
        <position position="19"/>
    </location>
</feature>
<feature type="mutagenesis site" description="No effect." evidence="3">
    <original>E</original>
    <variation>A</variation>
    <location>
        <position position="20"/>
    </location>
</feature>
<feature type="mutagenesis site" description="No effect." evidence="3">
    <original>E</original>
    <variation>A</variation>
    <location>
        <position position="22"/>
    </location>
</feature>
<feature type="mutagenesis site" description="No effect." evidence="3">
    <original>E</original>
    <variation>A</variation>
    <location>
        <position position="23"/>
    </location>
</feature>
<feature type="mutagenesis site" description="No effect." evidence="3">
    <original>S</original>
    <variation>A</variation>
    <location>
        <position position="24"/>
    </location>
</feature>
<feature type="mutagenesis site" description="No effect." evidence="3">
    <original>T</original>
    <variation>A</variation>
    <location>
        <position position="25"/>
    </location>
</feature>
<feature type="mutagenesis site" description="Decrease in binding affinity for mRNA." evidence="3">
    <original>Q</original>
    <variation>A</variation>
    <location>
        <position position="26"/>
    </location>
</feature>
<feature type="mutagenesis site" description="No effect." evidence="3">
    <original>R</original>
    <variation>A</variation>
    <location>
        <position position="32"/>
    </location>
</feature>
<feature type="mutagenesis site" description="Great decrease in binding affinity for mRNA." evidence="3">
    <original>W</original>
    <variation>A</variation>
    <location>
        <position position="35"/>
    </location>
</feature>
<feature type="mutagenesis site" description="Increased ability to bind to hut mRNA in the presence of histidine." evidence="2">
    <original>V</original>
    <variation>I</variation>
    <location>
        <position position="51"/>
    </location>
</feature>
<feature type="helix" evidence="5">
    <location>
        <begin position="5"/>
        <end position="7"/>
    </location>
</feature>
<feature type="helix" evidence="5">
    <location>
        <begin position="9"/>
        <end position="17"/>
    </location>
</feature>
<feature type="helix" evidence="5">
    <location>
        <begin position="26"/>
        <end position="32"/>
    </location>
</feature>
<feature type="strand" evidence="5">
    <location>
        <begin position="36"/>
        <end position="45"/>
    </location>
</feature>
<feature type="helix" evidence="5">
    <location>
        <begin position="47"/>
        <end position="60"/>
    </location>
</feature>
<feature type="strand" evidence="6">
    <location>
        <begin position="61"/>
        <end position="64"/>
    </location>
</feature>
<feature type="strand" evidence="5">
    <location>
        <begin position="66"/>
        <end position="69"/>
    </location>
</feature>
<feature type="helix" evidence="5">
    <location>
        <begin position="70"/>
        <end position="87"/>
    </location>
</feature>
<feature type="helix" evidence="5">
    <location>
        <begin position="94"/>
        <end position="96"/>
    </location>
</feature>
<feature type="strand" evidence="5">
    <location>
        <begin position="99"/>
        <end position="109"/>
    </location>
</feature>
<feature type="strand" evidence="5">
    <location>
        <begin position="112"/>
        <end position="114"/>
    </location>
</feature>
<feature type="helix" evidence="5">
    <location>
        <begin position="115"/>
        <end position="117"/>
    </location>
</feature>
<feature type="strand" evidence="5">
    <location>
        <begin position="120"/>
        <end position="133"/>
    </location>
</feature>
<feature type="strand" evidence="5">
    <location>
        <begin position="136"/>
        <end position="147"/>
    </location>
</feature>
<proteinExistence type="evidence at protein level"/>
<accession>P10943</accession>